<accession>A0A2H3CSB7</accession>
<proteinExistence type="evidence at protein level"/>
<sequence>MPSSLKLLSNLIAESVDKIEQRCAAQGVPFPELNEVLSFQSEAIRSDTDVAEAIQVIAASAAQLLATAMSPIATLSVVAHQWDVPACLGAANDANVAEILRDAGPKGAHIDDIAKRNGTNAGRLGRVLRLLASHHIFREVSPDVFANNRISSLLDSKKPVEELEKNPQSKYTETSLVNTFVSFGAGEFFKGGAFLSETLRDPVFGHSDEANHSAFNKAFKFDVSFFEWMERPENKDVLSRFSLMMRATTDLLPDAAILNGFDFGSLPDGALVVDVAGGIGSLSMVLAKTFPKLNFVVEDRPQLASDAEPYWKSNLPEALESGRVRLVAHDMFTPQPDLGSPVDVFVLRGILHDWADSYGIRLLSHLRAAAGPQTKLVVIEILLESPCRDPETSTIKGCEPRTVPEPLLANMGAADSVDYSMDMMMMGFGNGQERTLRHYVKILSETGWELKEVIHIDSLHIGPLRPHLIAVPV</sequence>
<reference key="1">
    <citation type="journal article" date="2017" name="Nat. Ecol. Evol.">
        <title>Genome expansion and lineage-specific genetic innovations in the forest pathogenic fungi Armillaria.</title>
        <authorList>
            <person name="Sipos G."/>
            <person name="Prasanna A.N."/>
            <person name="Walter M.C."/>
            <person name="O'Connor E."/>
            <person name="Balint B."/>
            <person name="Krizsan K."/>
            <person name="Kiss B."/>
            <person name="Hess J."/>
            <person name="Varga T."/>
            <person name="Slot J."/>
            <person name="Riley R."/>
            <person name="Boka B."/>
            <person name="Rigling D."/>
            <person name="Barry K."/>
            <person name="Lee J."/>
            <person name="Mihaltcheva S."/>
            <person name="LaButti K."/>
            <person name="Lipzen A."/>
            <person name="Waldron R."/>
            <person name="Moloney N.M."/>
            <person name="Sperisen C."/>
            <person name="Kredics L."/>
            <person name="Vagvoelgyi C."/>
            <person name="Patrignani A."/>
            <person name="Fitzpatrick D."/>
            <person name="Nagy I."/>
            <person name="Doyle S."/>
            <person name="Anderson J.B."/>
            <person name="Grigoriev I.V."/>
            <person name="Gueldener U."/>
            <person name="Muensterkoetter M."/>
            <person name="Nagy L.G."/>
        </authorList>
    </citation>
    <scope>NUCLEOTIDE SEQUENCE [LARGE SCALE GENOMIC DNA]</scope>
    <source>
        <strain>Ar21-2</strain>
    </source>
</reference>
<reference key="2">
    <citation type="journal article" date="2011" name="Bioorg. Med. Chem. Lett.">
        <title>In vitro cytotoxicity of melleolide antibiotics: structural and mechanistic aspects.</title>
        <authorList>
            <person name="Bohnert M."/>
            <person name="Miethbauer S."/>
            <person name="Dahse H.M."/>
            <person name="Ziemen J."/>
            <person name="Nett M."/>
            <person name="Hoffmeister D."/>
        </authorList>
    </citation>
    <scope>BIOTECHNOLOGY</scope>
</reference>
<reference key="3">
    <citation type="journal article" date="2011" name="J. Biol. Chem.">
        <title>Cloning and characterization of an Armillaria gallica cDNA encoding protoilludene synthase, which catalyzes the first committed step in the synthesis of antimicrobial melleolides.</title>
        <authorList>
            <person name="Engels B."/>
            <person name="Heinig U."/>
            <person name="Grothe T."/>
            <person name="Stadler M."/>
            <person name="Jennewein S."/>
        </authorList>
    </citation>
    <scope>FUNCTION</scope>
    <source>
        <strain>FU02472</strain>
    </source>
</reference>
<reference key="4">
    <citation type="journal article" date="2013" name="Evid. Based Complement Alternat. Med.">
        <title>Therapeutic and radiosensitizing effects of armillaridin on human esophageal cancer cells.</title>
        <authorList>
            <person name="Chi C.W."/>
            <person name="Chen C.C."/>
            <person name="Chen Y.J."/>
        </authorList>
    </citation>
    <scope>BIOTECHNOLOGY</scope>
</reference>
<reference key="5">
    <citation type="journal article" date="2015" name="Int. J. Med. Mushrooms">
        <title>Armillaridin, a honey medicinal mushroom, Armillaria mellea (higher basidiomycetes) component, inhibits differentiation and activation of human macrophages.</title>
        <authorList>
            <person name="Liu T.P."/>
            <person name="Chen C.C."/>
            <person name="Shiao P.Y."/>
            <person name="Shieh H.R."/>
            <person name="Chen Y.Y."/>
            <person name="Chen Y.J."/>
        </authorList>
    </citation>
    <scope>BIOTECHNOLOGY</scope>
</reference>
<reference key="6">
    <citation type="journal article" date="2016" name="J. Ethnopharmacol.">
        <title>Structure, cytotoxic activity and mechanism of protoilludane sesquiterpene aryl esters from the mycelium of Armillaria mellea.</title>
        <authorList>
            <person name="Li Z."/>
            <person name="Wang Y."/>
            <person name="Jiang B."/>
            <person name="Li W."/>
            <person name="Zheng L."/>
            <person name="Yang X."/>
            <person name="Bao Y."/>
            <person name="Sun L."/>
            <person name="Huang Y."/>
            <person name="Li Y."/>
        </authorList>
    </citation>
    <scope>BIOTECHNOLOGY</scope>
</reference>
<reference key="7">
    <citation type="journal article" date="2016" name="Tumor Biol.">
        <title>Armillaridin induces autophagy-associated cell death in human chronic myelogenous leukemia K562 cells.</title>
        <authorList>
            <person name="Chang W.H."/>
            <person name="Huang H.L."/>
            <person name="Huang W.P."/>
            <person name="Chen C.C."/>
            <person name="Chen Y.J."/>
        </authorList>
    </citation>
    <scope>BIOTECHNOLOGY</scope>
</reference>
<reference key="8">
    <citation type="journal article" date="2018" name="Curr. Biol.">
        <title>Armillaria.</title>
        <authorList>
            <person name="Sipos G."/>
            <person name="Anderson J.B."/>
            <person name="Nagy L.G."/>
        </authorList>
    </citation>
    <scope>MISCELLANEOUS</scope>
</reference>
<reference key="9">
    <citation type="journal article" date="2018" name="Proc. R. Soc. B">
        <title>Clonal evolution and genome stability in a 2500-year-old fungal individual.</title>
        <authorList>
            <person name="Anderson J.B."/>
            <person name="Bruhn J.N."/>
            <person name="Kasimer D."/>
            <person name="Wang H."/>
            <person name="Rodrigue N."/>
            <person name="Smith M.L."/>
        </authorList>
    </citation>
    <scope>MISCELLANEOUS</scope>
</reference>
<reference key="10">
    <citation type="journal article" date="2019" name="Am. J. Chin. Med.">
        <title>Induction of autophagic death of human hepatocellular carcinoma cells by armillaridin from Armillaria mellea.</title>
        <authorList>
            <person name="Leu Y.S."/>
            <person name="Chen Y.J."/>
            <person name="Chen C.C."/>
            <person name="Huang H.L."/>
        </authorList>
    </citation>
    <scope>BIOTECHNOLOGY</scope>
</reference>
<reference key="11">
    <citation type="journal article" date="2020" name="Plant Dis.">
        <title>Susceptibility of garden trees and shrubs to Armillaria root rot.</title>
        <authorList>
            <person name="Cromey M.G."/>
            <person name="Drakulic J."/>
            <person name="Beal E.J."/>
            <person name="Waghorn I.A.G."/>
            <person name="Perry J.N."/>
            <person name="Clover G.R.G."/>
        </authorList>
    </citation>
    <scope>MISCELLANEOUS</scope>
</reference>
<dbReference type="EC" id="2.1.1.-"/>
<dbReference type="EMBL" id="KZ293696">
    <property type="protein sequence ID" value="PBK84750.1"/>
    <property type="molecule type" value="Genomic_DNA"/>
</dbReference>
<dbReference type="SMR" id="A0A2H3CSB7"/>
<dbReference type="STRING" id="47427.A0A2H3CSB7"/>
<dbReference type="InParanoid" id="A0A2H3CSB7"/>
<dbReference type="OMA" id="FEWMERP"/>
<dbReference type="OrthoDB" id="2410195at2759"/>
<dbReference type="Proteomes" id="UP000217790">
    <property type="component" value="Unassembled WGS sequence"/>
</dbReference>
<dbReference type="GO" id="GO:0008171">
    <property type="term" value="F:O-methyltransferase activity"/>
    <property type="evidence" value="ECO:0007669"/>
    <property type="project" value="InterPro"/>
</dbReference>
<dbReference type="GO" id="GO:0046983">
    <property type="term" value="F:protein dimerization activity"/>
    <property type="evidence" value="ECO:0007669"/>
    <property type="project" value="InterPro"/>
</dbReference>
<dbReference type="GO" id="GO:0032259">
    <property type="term" value="P:methylation"/>
    <property type="evidence" value="ECO:0007669"/>
    <property type="project" value="UniProtKB-KW"/>
</dbReference>
<dbReference type="GO" id="GO:0044550">
    <property type="term" value="P:secondary metabolite biosynthetic process"/>
    <property type="evidence" value="ECO:0007669"/>
    <property type="project" value="UniProtKB-ARBA"/>
</dbReference>
<dbReference type="Gene3D" id="3.40.50.150">
    <property type="entry name" value="Vaccinia Virus protein VP39"/>
    <property type="match status" value="1"/>
</dbReference>
<dbReference type="Gene3D" id="1.10.10.10">
    <property type="entry name" value="Winged helix-like DNA-binding domain superfamily/Winged helix DNA-binding domain"/>
    <property type="match status" value="1"/>
</dbReference>
<dbReference type="InterPro" id="IPR016461">
    <property type="entry name" value="COMT-like"/>
</dbReference>
<dbReference type="InterPro" id="IPR001077">
    <property type="entry name" value="O_MeTrfase_dom"/>
</dbReference>
<dbReference type="InterPro" id="IPR012967">
    <property type="entry name" value="Plant_O-MeTrfase_dimerisation"/>
</dbReference>
<dbReference type="InterPro" id="IPR029063">
    <property type="entry name" value="SAM-dependent_MTases_sf"/>
</dbReference>
<dbReference type="InterPro" id="IPR036388">
    <property type="entry name" value="WH-like_DNA-bd_sf"/>
</dbReference>
<dbReference type="InterPro" id="IPR036390">
    <property type="entry name" value="WH_DNA-bd_sf"/>
</dbReference>
<dbReference type="PANTHER" id="PTHR43712:SF2">
    <property type="entry name" value="O-METHYLTRANSFERASE CICE"/>
    <property type="match status" value="1"/>
</dbReference>
<dbReference type="PANTHER" id="PTHR43712">
    <property type="entry name" value="PUTATIVE (AFU_ORTHOLOGUE AFUA_4G14580)-RELATED"/>
    <property type="match status" value="1"/>
</dbReference>
<dbReference type="Pfam" id="PF08100">
    <property type="entry name" value="Dimerisation"/>
    <property type="match status" value="1"/>
</dbReference>
<dbReference type="Pfam" id="PF00891">
    <property type="entry name" value="Methyltransf_2"/>
    <property type="match status" value="1"/>
</dbReference>
<dbReference type="SUPFAM" id="SSF53335">
    <property type="entry name" value="S-adenosyl-L-methionine-dependent methyltransferases"/>
    <property type="match status" value="1"/>
</dbReference>
<dbReference type="SUPFAM" id="SSF46785">
    <property type="entry name" value="Winged helix' DNA-binding domain"/>
    <property type="match status" value="1"/>
</dbReference>
<dbReference type="PROSITE" id="PS51683">
    <property type="entry name" value="SAM_OMT_II"/>
    <property type="match status" value="1"/>
</dbReference>
<organism>
    <name type="scientific">Armillaria gallica</name>
    <name type="common">Bulbous honey fungus</name>
    <name type="synonym">Armillaria bulbosa</name>
    <dbReference type="NCBI Taxonomy" id="47427"/>
    <lineage>
        <taxon>Eukaryota</taxon>
        <taxon>Fungi</taxon>
        <taxon>Dikarya</taxon>
        <taxon>Basidiomycota</taxon>
        <taxon>Agaricomycotina</taxon>
        <taxon>Agaricomycetes</taxon>
        <taxon>Agaricomycetidae</taxon>
        <taxon>Agaricales</taxon>
        <taxon>Marasmiineae</taxon>
        <taxon>Physalacriaceae</taxon>
        <taxon>Armillaria</taxon>
    </lineage>
</organism>
<comment type="function">
    <text evidence="1 4 13">O-methyltransferase, part of the gene cluster that mediates the biosynthesis of melleolides, a range of antifungal and phytotoxic polyketide derivatives composed of an orsellinic acid (OA) moiety esterified to various sesquiterpene alcohols (Probable). The first step in melleolides biosynthesis is performed by the delta(6)-protoilludene synthase PRO1 which catalyzes the cyclization of farnesyl diphosphate to protoilludene (PubMed:21148562). The orsellinic acid synthase armB produces OA by condensing acetyl-CoA with 3 malonyl-CoA units in a three-round chain elongation reaction folowed by a C2-C7 ring closure (By similarity). ArmB further catalyzes the trans-esterification of OA to the various sesquiterpene alcohols resulting from the hydroxylation of protoilludene (By similarity). The melleolides cluster also includes 5 cytochrome P450 monooxygenases, 4 NAD(+)-dependent oxidoreductases, one flavin-dependent oxidoreductase, and one O-methyltransferase (By similarity). The cytochrome P450 monooxygenases may be involved in protoilludene hydroxylation to elaborate melleolides with multiple alcohol groups, such as melleolide D, which carries alcohol functionalities at C-4, C-5, C-10, and C-13 (By similarity). The role of the NAD(+)-dependent enzymes remains unknown (By similarity). Numerous melleolides, including arnamial, show 5'-O-methylation of the aromatic moiety which may be catalyzed by the methyltransferase encoded in the cluster (By similarity). The flavin-dependent oxidoreductase might represent the dehydrogenase yielding the aldehyde in position 1 of arnamial and other melleolides (By similarity). Finally, several halogenase localized outside of the cluster, are able to catalyze the transfer of a single chlorine atom to the melleolide backbone, resulting in a 6'-chloromelleolide product (By similarity).</text>
</comment>
<comment type="pathway">
    <text evidence="13">Secondary metabolite biosynthesis.</text>
</comment>
<comment type="biotechnology">
    <text evidence="5 6 7 8 9 11">Melleolide sesquiterpene aryl esters are cytotoxic secondary products with anti-cancer potential (PubMed:21376582, PubMed:26952552). Armillaridin shows therapeutic and radiosensitizing effects on human esophageal cancer cells (PubMed:23864890). Armillaridin induces autophagy-associated cell death in human chronic myelogenous leukemia as well as of hepatocellular carcinoma cells (PubMed:27592257, PubMed:31488037). Armillaridin can also inhibit the differentiation and activation of human macrophages and thus might have potential to be developed as a biological response modifier for inflammatory diseases (PubMed:25746621).</text>
</comment>
<comment type="miscellaneous">
    <text evidence="10 12 14">Armillaria species are both devastating forest pathogens and some of the largest and oldest terrestrial organisms on Earth (Probable) (PubMed:31746694). They forage for hosts and achieve immense colony sizes via rhizomorphs, root-like multicellular structures of clonal dispersal (Probable). One genetic Armillaria gallica individual localized in Michigan's Upper Peninsula stands out as exceptionally large, covering hundreds of tree root systems over approximately 75 hectares of the forest floor (PubMed:30963893). Based on observed growth rates of the fungus, the minimum age of this large individual can be estimated as 2500 years (PubMed:30963893).</text>
</comment>
<comment type="similarity">
    <text evidence="3">Belongs to the class I-like SAM-binding methyltransferase superfamily. Cation-independent O-methyltransferase family.</text>
</comment>
<evidence type="ECO:0000250" key="1">
    <source>
        <dbReference type="UniProtKB" id="I3ZNU9"/>
    </source>
</evidence>
<evidence type="ECO:0000250" key="2">
    <source>
        <dbReference type="UniProtKB" id="O04385"/>
    </source>
</evidence>
<evidence type="ECO:0000255" key="3">
    <source>
        <dbReference type="PROSITE-ProRule" id="PRU01020"/>
    </source>
</evidence>
<evidence type="ECO:0000269" key="4">
    <source>
    </source>
</evidence>
<evidence type="ECO:0000269" key="5">
    <source>
    </source>
</evidence>
<evidence type="ECO:0000269" key="6">
    <source>
    </source>
</evidence>
<evidence type="ECO:0000269" key="7">
    <source>
    </source>
</evidence>
<evidence type="ECO:0000269" key="8">
    <source>
    </source>
</evidence>
<evidence type="ECO:0000269" key="9">
    <source>
    </source>
</evidence>
<evidence type="ECO:0000269" key="10">
    <source>
    </source>
</evidence>
<evidence type="ECO:0000269" key="11">
    <source>
    </source>
</evidence>
<evidence type="ECO:0000269" key="12">
    <source>
    </source>
</evidence>
<evidence type="ECO:0000305" key="13"/>
<evidence type="ECO:0000305" key="14">
    <source>
    </source>
</evidence>
<feature type="chain" id="PRO_0000449407" description="O-methyltransferase ARMGADRAFT_1088206">
    <location>
        <begin position="1"/>
        <end position="473"/>
    </location>
</feature>
<feature type="active site" description="Proton acceptor" evidence="3">
    <location>
        <position position="352"/>
    </location>
</feature>
<feature type="binding site" evidence="2">
    <location>
        <begin position="276"/>
        <end position="277"/>
    </location>
    <ligand>
        <name>S-adenosyl-L-methionine</name>
        <dbReference type="ChEBI" id="CHEBI:59789"/>
    </ligand>
</feature>
<feature type="binding site" evidence="3">
    <location>
        <position position="299"/>
    </location>
    <ligand>
        <name>S-adenosyl-L-methionine</name>
        <dbReference type="ChEBI" id="CHEBI:59789"/>
    </ligand>
</feature>
<feature type="binding site" evidence="2">
    <location>
        <begin position="330"/>
        <end position="331"/>
    </location>
    <ligand>
        <name>S-adenosyl-L-methionine</name>
        <dbReference type="ChEBI" id="CHEBI:59789"/>
    </ligand>
</feature>
<feature type="binding site" evidence="2">
    <location>
        <position position="348"/>
    </location>
    <ligand>
        <name>S-adenosyl-L-methionine</name>
        <dbReference type="ChEBI" id="CHEBI:59789"/>
    </ligand>
</feature>
<protein>
    <recommendedName>
        <fullName>O-methyltransferase ARMGADRAFT_1088206</fullName>
        <ecNumber>2.1.1.-</ecNumber>
    </recommendedName>
    <alternativeName>
        <fullName>Melleolide biosynthesis cluster protein ARMGADRAFT_1088206</fullName>
    </alternativeName>
</protein>
<name>ARMOM_ARMGA</name>
<gene>
    <name type="ORF">ARMGADRAFT_1088206</name>
</gene>
<keyword id="KW-0489">Methyltransferase</keyword>
<keyword id="KW-1185">Reference proteome</keyword>
<keyword id="KW-0949">S-adenosyl-L-methionine</keyword>
<keyword id="KW-0808">Transferase</keyword>